<proteinExistence type="inferred from homology"/>
<name>DDL_MYCVP</name>
<sequence>MTARIRVAVVYGGRSSEHAISCVSAGSILRNLDPQRFEVVPVGITPEGSWVLTDGRPETLAITDGALPGVSGSSGTELALAADPGRRGQLLSLGDAAGDVLAAVDVVFPVLHGPYGEDGTIQGLLELAGVPYVGAGVLASAAGMDKEFTKKLLTAAGLPVGDHVVLRPREATVSLEDRERLGLPVFVKPSRGGSSIGVSRVTAWDALPAAIELARRHDPKVIVEAAIPGRELECGVLEFPDGHLEASTVGEIRVAGVRGREDGFYDFETKYLDDGAELDVPAKVDDAIAEAVRGLAIRAFDAIDCQGLARVDFFLTDAGPVINEINTMPGFTTISMYPRMWAASGIDYPTLLATMVETAIARGTGLR</sequence>
<gene>
    <name evidence="2" type="primary">ddl</name>
    <name type="ordered locus">Mvan_2143</name>
</gene>
<evidence type="ECO:0000250" key="1"/>
<evidence type="ECO:0000255" key="2">
    <source>
        <dbReference type="HAMAP-Rule" id="MF_00047"/>
    </source>
</evidence>
<accession>A1T708</accession>
<feature type="chain" id="PRO_0000341137" description="D-alanine--D-alanine ligase">
    <location>
        <begin position="1"/>
        <end position="367"/>
    </location>
</feature>
<feature type="domain" description="ATP-grasp" evidence="2">
    <location>
        <begin position="150"/>
        <end position="357"/>
    </location>
</feature>
<feature type="binding site" evidence="2">
    <location>
        <begin position="178"/>
        <end position="233"/>
    </location>
    <ligand>
        <name>ATP</name>
        <dbReference type="ChEBI" id="CHEBI:30616"/>
    </ligand>
</feature>
<feature type="binding site" evidence="2">
    <location>
        <position position="312"/>
    </location>
    <ligand>
        <name>Mg(2+)</name>
        <dbReference type="ChEBI" id="CHEBI:18420"/>
        <label>1</label>
    </ligand>
</feature>
<feature type="binding site" evidence="2">
    <location>
        <position position="324"/>
    </location>
    <ligand>
        <name>Mg(2+)</name>
        <dbReference type="ChEBI" id="CHEBI:18420"/>
        <label>1</label>
    </ligand>
</feature>
<feature type="binding site" evidence="2">
    <location>
        <position position="324"/>
    </location>
    <ligand>
        <name>Mg(2+)</name>
        <dbReference type="ChEBI" id="CHEBI:18420"/>
        <label>2</label>
    </ligand>
</feature>
<feature type="binding site" evidence="2">
    <location>
        <position position="326"/>
    </location>
    <ligand>
        <name>Mg(2+)</name>
        <dbReference type="ChEBI" id="CHEBI:18420"/>
        <label>2</label>
    </ligand>
</feature>
<keyword id="KW-0067">ATP-binding</keyword>
<keyword id="KW-0133">Cell shape</keyword>
<keyword id="KW-0961">Cell wall biogenesis/degradation</keyword>
<keyword id="KW-0963">Cytoplasm</keyword>
<keyword id="KW-0436">Ligase</keyword>
<keyword id="KW-0460">Magnesium</keyword>
<keyword id="KW-0464">Manganese</keyword>
<keyword id="KW-0479">Metal-binding</keyword>
<keyword id="KW-0547">Nucleotide-binding</keyword>
<keyword id="KW-0573">Peptidoglycan synthesis</keyword>
<dbReference type="EC" id="6.3.2.4" evidence="2"/>
<dbReference type="EMBL" id="CP000511">
    <property type="protein sequence ID" value="ABM12958.1"/>
    <property type="molecule type" value="Genomic_DNA"/>
</dbReference>
<dbReference type="RefSeq" id="WP_011779372.1">
    <property type="nucleotide sequence ID" value="NZ_JACKSD010000243.1"/>
</dbReference>
<dbReference type="SMR" id="A1T708"/>
<dbReference type="STRING" id="350058.Mvan_2143"/>
<dbReference type="KEGG" id="mva:Mvan_2143"/>
<dbReference type="eggNOG" id="COG1181">
    <property type="taxonomic scope" value="Bacteria"/>
</dbReference>
<dbReference type="HOGENOM" id="CLU_039268_0_1_11"/>
<dbReference type="UniPathway" id="UPA00219"/>
<dbReference type="Proteomes" id="UP000009159">
    <property type="component" value="Chromosome"/>
</dbReference>
<dbReference type="GO" id="GO:0005829">
    <property type="term" value="C:cytosol"/>
    <property type="evidence" value="ECO:0007669"/>
    <property type="project" value="TreeGrafter"/>
</dbReference>
<dbReference type="GO" id="GO:0005524">
    <property type="term" value="F:ATP binding"/>
    <property type="evidence" value="ECO:0007669"/>
    <property type="project" value="UniProtKB-KW"/>
</dbReference>
<dbReference type="GO" id="GO:0008716">
    <property type="term" value="F:D-alanine-D-alanine ligase activity"/>
    <property type="evidence" value="ECO:0007669"/>
    <property type="project" value="UniProtKB-UniRule"/>
</dbReference>
<dbReference type="GO" id="GO:0046872">
    <property type="term" value="F:metal ion binding"/>
    <property type="evidence" value="ECO:0007669"/>
    <property type="project" value="UniProtKB-KW"/>
</dbReference>
<dbReference type="GO" id="GO:0071555">
    <property type="term" value="P:cell wall organization"/>
    <property type="evidence" value="ECO:0007669"/>
    <property type="project" value="UniProtKB-KW"/>
</dbReference>
<dbReference type="GO" id="GO:0009252">
    <property type="term" value="P:peptidoglycan biosynthetic process"/>
    <property type="evidence" value="ECO:0007669"/>
    <property type="project" value="UniProtKB-UniRule"/>
</dbReference>
<dbReference type="GO" id="GO:0008360">
    <property type="term" value="P:regulation of cell shape"/>
    <property type="evidence" value="ECO:0007669"/>
    <property type="project" value="UniProtKB-KW"/>
</dbReference>
<dbReference type="FunFam" id="3.30.470.20:FF:000008">
    <property type="entry name" value="D-alanine--D-alanine ligase"/>
    <property type="match status" value="1"/>
</dbReference>
<dbReference type="Gene3D" id="3.40.50.20">
    <property type="match status" value="1"/>
</dbReference>
<dbReference type="Gene3D" id="3.30.1490.20">
    <property type="entry name" value="ATP-grasp fold, A domain"/>
    <property type="match status" value="1"/>
</dbReference>
<dbReference type="Gene3D" id="3.30.470.20">
    <property type="entry name" value="ATP-grasp fold, B domain"/>
    <property type="match status" value="1"/>
</dbReference>
<dbReference type="HAMAP" id="MF_00047">
    <property type="entry name" value="Dala_Dala_lig"/>
    <property type="match status" value="1"/>
</dbReference>
<dbReference type="InterPro" id="IPR011761">
    <property type="entry name" value="ATP-grasp"/>
</dbReference>
<dbReference type="InterPro" id="IPR013815">
    <property type="entry name" value="ATP_grasp_subdomain_1"/>
</dbReference>
<dbReference type="InterPro" id="IPR000291">
    <property type="entry name" value="D-Ala_lig_Van_CS"/>
</dbReference>
<dbReference type="InterPro" id="IPR005905">
    <property type="entry name" value="D_ala_D_ala"/>
</dbReference>
<dbReference type="InterPro" id="IPR011095">
    <property type="entry name" value="Dala_Dala_lig_C"/>
</dbReference>
<dbReference type="InterPro" id="IPR011127">
    <property type="entry name" value="Dala_Dala_lig_N"/>
</dbReference>
<dbReference type="InterPro" id="IPR016185">
    <property type="entry name" value="PreATP-grasp_dom_sf"/>
</dbReference>
<dbReference type="NCBIfam" id="TIGR01205">
    <property type="entry name" value="D_ala_D_alaTIGR"/>
    <property type="match status" value="1"/>
</dbReference>
<dbReference type="NCBIfam" id="NF002378">
    <property type="entry name" value="PRK01372.1"/>
    <property type="match status" value="1"/>
</dbReference>
<dbReference type="NCBIfam" id="NF002528">
    <property type="entry name" value="PRK01966.1-4"/>
    <property type="match status" value="1"/>
</dbReference>
<dbReference type="PANTHER" id="PTHR23132">
    <property type="entry name" value="D-ALANINE--D-ALANINE LIGASE"/>
    <property type="match status" value="1"/>
</dbReference>
<dbReference type="PANTHER" id="PTHR23132:SF25">
    <property type="entry name" value="D-ALANINE--D-ALANINE LIGASE A"/>
    <property type="match status" value="1"/>
</dbReference>
<dbReference type="Pfam" id="PF07478">
    <property type="entry name" value="Dala_Dala_lig_C"/>
    <property type="match status" value="1"/>
</dbReference>
<dbReference type="Pfam" id="PF01820">
    <property type="entry name" value="Dala_Dala_lig_N"/>
    <property type="match status" value="1"/>
</dbReference>
<dbReference type="PIRSF" id="PIRSF039102">
    <property type="entry name" value="Ddl/VanB"/>
    <property type="match status" value="1"/>
</dbReference>
<dbReference type="SUPFAM" id="SSF56059">
    <property type="entry name" value="Glutathione synthetase ATP-binding domain-like"/>
    <property type="match status" value="1"/>
</dbReference>
<dbReference type="SUPFAM" id="SSF52440">
    <property type="entry name" value="PreATP-grasp domain"/>
    <property type="match status" value="1"/>
</dbReference>
<dbReference type="PROSITE" id="PS50975">
    <property type="entry name" value="ATP_GRASP"/>
    <property type="match status" value="1"/>
</dbReference>
<dbReference type="PROSITE" id="PS00843">
    <property type="entry name" value="DALA_DALA_LIGASE_1"/>
    <property type="match status" value="1"/>
</dbReference>
<dbReference type="PROSITE" id="PS00844">
    <property type="entry name" value="DALA_DALA_LIGASE_2"/>
    <property type="match status" value="1"/>
</dbReference>
<organism>
    <name type="scientific">Mycolicibacterium vanbaalenii (strain DSM 7251 / JCM 13017 / BCRC 16820 / KCTC 9966 / NRRL B-24157 / PYR-1)</name>
    <name type="common">Mycobacterium vanbaalenii</name>
    <dbReference type="NCBI Taxonomy" id="350058"/>
    <lineage>
        <taxon>Bacteria</taxon>
        <taxon>Bacillati</taxon>
        <taxon>Actinomycetota</taxon>
        <taxon>Actinomycetes</taxon>
        <taxon>Mycobacteriales</taxon>
        <taxon>Mycobacteriaceae</taxon>
        <taxon>Mycolicibacterium</taxon>
    </lineage>
</organism>
<reference key="1">
    <citation type="submission" date="2006-12" db="EMBL/GenBank/DDBJ databases">
        <title>Complete sequence of Mycobacterium vanbaalenii PYR-1.</title>
        <authorList>
            <consortium name="US DOE Joint Genome Institute"/>
            <person name="Copeland A."/>
            <person name="Lucas S."/>
            <person name="Lapidus A."/>
            <person name="Barry K."/>
            <person name="Detter J.C."/>
            <person name="Glavina del Rio T."/>
            <person name="Hammon N."/>
            <person name="Israni S."/>
            <person name="Dalin E."/>
            <person name="Tice H."/>
            <person name="Pitluck S."/>
            <person name="Singan V."/>
            <person name="Schmutz J."/>
            <person name="Larimer F."/>
            <person name="Land M."/>
            <person name="Hauser L."/>
            <person name="Kyrpides N."/>
            <person name="Anderson I.J."/>
            <person name="Miller C."/>
            <person name="Richardson P."/>
        </authorList>
    </citation>
    <scope>NUCLEOTIDE SEQUENCE [LARGE SCALE GENOMIC DNA]</scope>
    <source>
        <strain>DSM 7251 / JCM 13017 / BCRC 16820 / KCTC 9966 / NRRL B-24157 / PYR-1</strain>
    </source>
</reference>
<comment type="function">
    <text evidence="2">Cell wall formation.</text>
</comment>
<comment type="catalytic activity">
    <reaction evidence="2">
        <text>2 D-alanine + ATP = D-alanyl-D-alanine + ADP + phosphate + H(+)</text>
        <dbReference type="Rhea" id="RHEA:11224"/>
        <dbReference type="ChEBI" id="CHEBI:15378"/>
        <dbReference type="ChEBI" id="CHEBI:30616"/>
        <dbReference type="ChEBI" id="CHEBI:43474"/>
        <dbReference type="ChEBI" id="CHEBI:57416"/>
        <dbReference type="ChEBI" id="CHEBI:57822"/>
        <dbReference type="ChEBI" id="CHEBI:456216"/>
        <dbReference type="EC" id="6.3.2.4"/>
    </reaction>
</comment>
<comment type="cofactor">
    <cofactor evidence="1">
        <name>Mg(2+)</name>
        <dbReference type="ChEBI" id="CHEBI:18420"/>
    </cofactor>
    <cofactor evidence="1">
        <name>Mn(2+)</name>
        <dbReference type="ChEBI" id="CHEBI:29035"/>
    </cofactor>
    <text evidence="1">Binds 2 magnesium or manganese ions per subunit.</text>
</comment>
<comment type="pathway">
    <text evidence="2">Cell wall biogenesis; peptidoglycan biosynthesis.</text>
</comment>
<comment type="subcellular location">
    <subcellularLocation>
        <location evidence="2">Cytoplasm</location>
    </subcellularLocation>
</comment>
<comment type="similarity">
    <text evidence="2">Belongs to the D-alanine--D-alanine ligase family.</text>
</comment>
<protein>
    <recommendedName>
        <fullName evidence="2">D-alanine--D-alanine ligase</fullName>
        <ecNumber evidence="2">6.3.2.4</ecNumber>
    </recommendedName>
    <alternativeName>
        <fullName evidence="2">D-Ala-D-Ala ligase</fullName>
    </alternativeName>
    <alternativeName>
        <fullName evidence="2">D-alanylalanine synthetase</fullName>
    </alternativeName>
</protein>